<gene>
    <name evidence="1" type="primary">gppA</name>
    <name type="ordered locus">Ecok1_37450</name>
    <name type="ORF">APECO1_2694</name>
</gene>
<comment type="function">
    <text evidence="1">Catalyzes the conversion of pppGpp to ppGpp. Guanosine pentaphosphate (pppGpp) is a cytoplasmic signaling molecule which together with ppGpp controls the 'stringent response', an adaptive process that allows bacteria to respond to amino acid starvation, resulting in the coordinated regulation of numerous cellular activities.</text>
</comment>
<comment type="catalytic activity">
    <reaction evidence="1">
        <text>guanosine 3'-diphosphate 5'-triphosphate + H2O = guanosine 3',5'-bis(diphosphate) + phosphate + H(+)</text>
        <dbReference type="Rhea" id="RHEA:13073"/>
        <dbReference type="ChEBI" id="CHEBI:15377"/>
        <dbReference type="ChEBI" id="CHEBI:15378"/>
        <dbReference type="ChEBI" id="CHEBI:43474"/>
        <dbReference type="ChEBI" id="CHEBI:77828"/>
        <dbReference type="ChEBI" id="CHEBI:142410"/>
        <dbReference type="EC" id="3.6.1.40"/>
    </reaction>
</comment>
<comment type="pathway">
    <text evidence="1">Purine metabolism; ppGpp biosynthesis; ppGpp from GTP: step 2/2.</text>
</comment>
<comment type="similarity">
    <text evidence="1">Belongs to the GppA/Ppx family. GppA subfamily.</text>
</comment>
<comment type="sequence caution" evidence="2">
    <conflict type="erroneous initiation">
        <sequence resource="EMBL-CDS" id="ABJ03239"/>
    </conflict>
</comment>
<protein>
    <recommendedName>
        <fullName evidence="1">Guanosine-5'-triphosphate,3'-diphosphate pyrophosphatase</fullName>
        <ecNumber evidence="1">3.6.1.40</ecNumber>
    </recommendedName>
    <alternativeName>
        <fullName evidence="1">Guanosine pentaphosphate phosphohydrolase</fullName>
    </alternativeName>
    <alternativeName>
        <fullName evidence="1">pppGpp-5'-phosphohydrolase</fullName>
    </alternativeName>
</protein>
<keyword id="KW-0378">Hydrolase</keyword>
<keyword id="KW-1185">Reference proteome</keyword>
<feature type="chain" id="PRO_0000314495" description="Guanosine-5'-triphosphate,3'-diphosphate pyrophosphatase">
    <location>
        <begin position="1"/>
        <end position="494"/>
    </location>
</feature>
<name>GPPA_ECOK1</name>
<evidence type="ECO:0000255" key="1">
    <source>
        <dbReference type="HAMAP-Rule" id="MF_01550"/>
    </source>
</evidence>
<evidence type="ECO:0000305" key="2"/>
<organism>
    <name type="scientific">Escherichia coli O1:K1 / APEC</name>
    <dbReference type="NCBI Taxonomy" id="405955"/>
    <lineage>
        <taxon>Bacteria</taxon>
        <taxon>Pseudomonadati</taxon>
        <taxon>Pseudomonadota</taxon>
        <taxon>Gammaproteobacteria</taxon>
        <taxon>Enterobacterales</taxon>
        <taxon>Enterobacteriaceae</taxon>
        <taxon>Escherichia</taxon>
    </lineage>
</organism>
<reference key="1">
    <citation type="journal article" date="2007" name="J. Bacteriol.">
        <title>The genome sequence of avian pathogenic Escherichia coli strain O1:K1:H7 shares strong similarities with human extraintestinal pathogenic E. coli genomes.</title>
        <authorList>
            <person name="Johnson T.J."/>
            <person name="Kariyawasam S."/>
            <person name="Wannemuehler Y."/>
            <person name="Mangiamele P."/>
            <person name="Johnson S.J."/>
            <person name="Doetkott C."/>
            <person name="Skyberg J.A."/>
            <person name="Lynne A.M."/>
            <person name="Johnson J.R."/>
            <person name="Nolan L.K."/>
        </authorList>
    </citation>
    <scope>NUCLEOTIDE SEQUENCE [LARGE SCALE GENOMIC DNA]</scope>
</reference>
<sequence>MGSTSSLYAAIDLGSNSFHMLVVREVAGSIQTLTRIKRKVRLAAGLNSENALSNEAMERGWQCLRLFAERLQDIPPSQIRVVATATLRLAVNAGDFIAKAQEILGCPVQVISGEEEARLIYQGVAHTTGGADQRLVVDIGGASTELVTGTGAQTTSLFSLSMGCVTWLERYFADRNLGQENFDAAEKAAREVLRPVADELRYHGWKVCVGASGTVQALQEIMMAQGMDERITLEKLQQLKQRAIHCGRLEELEIDGLTLERALVFPSGLAILIAIFTELNIQCMTLAGGALREGLVYGMLHLTVEQDIRSRTLRNIQRRFMIDIDQAQRVAKVAANFFDQVENEWHLEAISRDLLISACQLHEIGLSVDFKQAPQHAAYLVRNLDLPGFTPAQKKLLATLLLNQTNPVDLSSLHQQNAVPPRVAEQLCRLLRLAIIFASRRRDDLVPEMTLQANHELLTLTLPQGWLTQHPLGKEIIDQESQWQSYVHWPLEVH</sequence>
<accession>A1AHU9</accession>
<dbReference type="EC" id="3.6.1.40" evidence="1"/>
<dbReference type="EMBL" id="CP000468">
    <property type="protein sequence ID" value="ABJ03239.1"/>
    <property type="status" value="ALT_INIT"/>
    <property type="molecule type" value="Genomic_DNA"/>
</dbReference>
<dbReference type="RefSeq" id="WP_001314257.1">
    <property type="nucleotide sequence ID" value="NZ_CADILS010000046.1"/>
</dbReference>
<dbReference type="SMR" id="A1AHU9"/>
<dbReference type="KEGG" id="ecv:APECO1_2694"/>
<dbReference type="HOGENOM" id="CLU_025908_4_0_6"/>
<dbReference type="UniPathway" id="UPA00908">
    <property type="reaction ID" value="UER00885"/>
</dbReference>
<dbReference type="Proteomes" id="UP000008216">
    <property type="component" value="Chromosome"/>
</dbReference>
<dbReference type="GO" id="GO:0008894">
    <property type="term" value="F:guanosine-5'-triphosphate,3'-diphosphate diphosphatase activity"/>
    <property type="evidence" value="ECO:0007669"/>
    <property type="project" value="UniProtKB-UniRule"/>
</dbReference>
<dbReference type="GO" id="GO:0015974">
    <property type="term" value="P:guanosine pentaphosphate catabolic process"/>
    <property type="evidence" value="ECO:0007669"/>
    <property type="project" value="InterPro"/>
</dbReference>
<dbReference type="GO" id="GO:0015970">
    <property type="term" value="P:guanosine tetraphosphate biosynthetic process"/>
    <property type="evidence" value="ECO:0007669"/>
    <property type="project" value="UniProtKB-UniRule"/>
</dbReference>
<dbReference type="GO" id="GO:0015949">
    <property type="term" value="P:nucleobase-containing small molecule interconversion"/>
    <property type="evidence" value="ECO:0007669"/>
    <property type="project" value="TreeGrafter"/>
</dbReference>
<dbReference type="CDD" id="cd24117">
    <property type="entry name" value="ASKHA_NBD_EcGppA-like"/>
    <property type="match status" value="1"/>
</dbReference>
<dbReference type="FunFam" id="1.10.3210.10:FF:000004">
    <property type="entry name" value="Guanosine-5'-triphosphate,3'-diphosphate pyrophosphatase"/>
    <property type="match status" value="1"/>
</dbReference>
<dbReference type="FunFam" id="3.30.420.150:FF:000001">
    <property type="entry name" value="Guanosine-5'-triphosphate,3'-diphosphate pyrophosphatase"/>
    <property type="match status" value="1"/>
</dbReference>
<dbReference type="FunFam" id="3.30.420.40:FF:000023">
    <property type="entry name" value="Guanosine-5'-triphosphate,3'-diphosphate pyrophosphatase"/>
    <property type="match status" value="1"/>
</dbReference>
<dbReference type="Gene3D" id="3.30.420.40">
    <property type="match status" value="1"/>
</dbReference>
<dbReference type="Gene3D" id="3.30.420.150">
    <property type="entry name" value="Exopolyphosphatase. Domain 2"/>
    <property type="match status" value="1"/>
</dbReference>
<dbReference type="Gene3D" id="1.10.3210.10">
    <property type="entry name" value="Hypothetical protein af1432"/>
    <property type="match status" value="1"/>
</dbReference>
<dbReference type="HAMAP" id="MF_01550">
    <property type="entry name" value="GppA"/>
    <property type="match status" value="1"/>
</dbReference>
<dbReference type="InterPro" id="IPR043129">
    <property type="entry name" value="ATPase_NBD"/>
</dbReference>
<dbReference type="InterPro" id="IPR050273">
    <property type="entry name" value="GppA/Ppx_hydrolase"/>
</dbReference>
<dbReference type="InterPro" id="IPR023709">
    <property type="entry name" value="Guo-5TP_3DP_PyrP"/>
</dbReference>
<dbReference type="InterPro" id="IPR048950">
    <property type="entry name" value="Ppx_GppA_C"/>
</dbReference>
<dbReference type="InterPro" id="IPR003695">
    <property type="entry name" value="Ppx_GppA_N"/>
</dbReference>
<dbReference type="InterPro" id="IPR030673">
    <property type="entry name" value="PyroPPase_GppA_Ppx"/>
</dbReference>
<dbReference type="NCBIfam" id="NF008260">
    <property type="entry name" value="PRK11031.1"/>
    <property type="match status" value="1"/>
</dbReference>
<dbReference type="PANTHER" id="PTHR30005">
    <property type="entry name" value="EXOPOLYPHOSPHATASE"/>
    <property type="match status" value="1"/>
</dbReference>
<dbReference type="PANTHER" id="PTHR30005:SF0">
    <property type="entry name" value="RETROGRADE REGULATION PROTEIN 2"/>
    <property type="match status" value="1"/>
</dbReference>
<dbReference type="Pfam" id="PF02541">
    <property type="entry name" value="Ppx-GppA"/>
    <property type="match status" value="1"/>
</dbReference>
<dbReference type="Pfam" id="PF21447">
    <property type="entry name" value="Ppx-GppA_III"/>
    <property type="match status" value="1"/>
</dbReference>
<dbReference type="PIRSF" id="PIRSF001267">
    <property type="entry name" value="Pyrophosphatase_GppA_Ppx"/>
    <property type="match status" value="1"/>
</dbReference>
<dbReference type="SUPFAM" id="SSF53067">
    <property type="entry name" value="Actin-like ATPase domain"/>
    <property type="match status" value="2"/>
</dbReference>
<dbReference type="SUPFAM" id="SSF109604">
    <property type="entry name" value="HD-domain/PDEase-like"/>
    <property type="match status" value="1"/>
</dbReference>
<proteinExistence type="inferred from homology"/>